<evidence type="ECO:0000255" key="1">
    <source>
        <dbReference type="HAMAP-Rule" id="MF_00104"/>
    </source>
</evidence>
<protein>
    <recommendedName>
        <fullName evidence="1">Ribonuclease 3</fullName>
        <ecNumber evidence="1">3.1.26.3</ecNumber>
    </recommendedName>
    <alternativeName>
        <fullName evidence="1">Ribonuclease III</fullName>
        <shortName evidence="1">RNase III</shortName>
    </alternativeName>
</protein>
<proteinExistence type="inferred from homology"/>
<gene>
    <name evidence="1" type="primary">rnc</name>
    <name type="ordered locus">TP_0809</name>
</gene>
<accession>O83787</accession>
<reference key="1">
    <citation type="journal article" date="1998" name="Science">
        <title>Complete genome sequence of Treponema pallidum, the syphilis spirochete.</title>
        <authorList>
            <person name="Fraser C.M."/>
            <person name="Norris S.J."/>
            <person name="Weinstock G.M."/>
            <person name="White O."/>
            <person name="Sutton G.G."/>
            <person name="Dodson R.J."/>
            <person name="Gwinn M.L."/>
            <person name="Hickey E.K."/>
            <person name="Clayton R.A."/>
            <person name="Ketchum K.A."/>
            <person name="Sodergren E."/>
            <person name="Hardham J.M."/>
            <person name="McLeod M.P."/>
            <person name="Salzberg S.L."/>
            <person name="Peterson J.D."/>
            <person name="Khalak H.G."/>
            <person name="Richardson D.L."/>
            <person name="Howell J.K."/>
            <person name="Chidambaram M."/>
            <person name="Utterback T.R."/>
            <person name="McDonald L.A."/>
            <person name="Artiach P."/>
            <person name="Bowman C."/>
            <person name="Cotton M.D."/>
            <person name="Fujii C."/>
            <person name="Garland S.A."/>
            <person name="Hatch B."/>
            <person name="Horst K."/>
            <person name="Roberts K.M."/>
            <person name="Sandusky M."/>
            <person name="Weidman J.F."/>
            <person name="Smith H.O."/>
            <person name="Venter J.C."/>
        </authorList>
    </citation>
    <scope>NUCLEOTIDE SEQUENCE [LARGE SCALE GENOMIC DNA]</scope>
    <source>
        <strain>Nichols</strain>
    </source>
</reference>
<feature type="chain" id="PRO_0000180450" description="Ribonuclease 3">
    <location>
        <begin position="1"/>
        <end position="254"/>
    </location>
</feature>
<feature type="domain" description="RNase III" evidence="1">
    <location>
        <begin position="24"/>
        <end position="154"/>
    </location>
</feature>
<feature type="domain" description="DRBM" evidence="1">
    <location>
        <begin position="181"/>
        <end position="250"/>
    </location>
</feature>
<feature type="active site" evidence="1">
    <location>
        <position position="71"/>
    </location>
</feature>
<feature type="active site" evidence="1">
    <location>
        <position position="143"/>
    </location>
</feature>
<feature type="binding site" evidence="1">
    <location>
        <position position="67"/>
    </location>
    <ligand>
        <name>Mg(2+)</name>
        <dbReference type="ChEBI" id="CHEBI:18420"/>
    </ligand>
</feature>
<feature type="binding site" evidence="1">
    <location>
        <position position="140"/>
    </location>
    <ligand>
        <name>Mg(2+)</name>
        <dbReference type="ChEBI" id="CHEBI:18420"/>
    </ligand>
</feature>
<feature type="binding site" evidence="1">
    <location>
        <position position="143"/>
    </location>
    <ligand>
        <name>Mg(2+)</name>
        <dbReference type="ChEBI" id="CHEBI:18420"/>
    </ligand>
</feature>
<comment type="function">
    <text evidence="1">Digests double-stranded RNA. Involved in the processing of primary rRNA transcript to yield the immediate precursors to the large and small rRNAs (23S and 16S). Processes some mRNAs, and tRNAs when they are encoded in the rRNA operon. Processes pre-crRNA and tracrRNA of type II CRISPR loci if present in the organism.</text>
</comment>
<comment type="catalytic activity">
    <reaction evidence="1">
        <text>Endonucleolytic cleavage to 5'-phosphomonoester.</text>
        <dbReference type="EC" id="3.1.26.3"/>
    </reaction>
</comment>
<comment type="cofactor">
    <cofactor evidence="1">
        <name>Mg(2+)</name>
        <dbReference type="ChEBI" id="CHEBI:18420"/>
    </cofactor>
</comment>
<comment type="subunit">
    <text evidence="1">Homodimer.</text>
</comment>
<comment type="subcellular location">
    <subcellularLocation>
        <location evidence="1">Cytoplasm</location>
    </subcellularLocation>
</comment>
<comment type="similarity">
    <text evidence="1">Belongs to the ribonuclease III family.</text>
</comment>
<dbReference type="EC" id="3.1.26.3" evidence="1"/>
<dbReference type="EMBL" id="AE000520">
    <property type="protein sequence ID" value="AAC65778.1"/>
    <property type="molecule type" value="Genomic_DNA"/>
</dbReference>
<dbReference type="PIR" id="G71277">
    <property type="entry name" value="G71277"/>
</dbReference>
<dbReference type="RefSeq" id="WP_010882254.1">
    <property type="nucleotide sequence ID" value="NC_021490.2"/>
</dbReference>
<dbReference type="SMR" id="O83787"/>
<dbReference type="IntAct" id="O83787">
    <property type="interactions" value="6"/>
</dbReference>
<dbReference type="STRING" id="243276.TP_0809"/>
<dbReference type="EnsemblBacteria" id="AAC65778">
    <property type="protein sequence ID" value="AAC65778"/>
    <property type="gene ID" value="TP_0809"/>
</dbReference>
<dbReference type="GeneID" id="93876570"/>
<dbReference type="KEGG" id="tpa:TP_0809"/>
<dbReference type="KEGG" id="tpw:TPANIC_0809"/>
<dbReference type="eggNOG" id="COG0571">
    <property type="taxonomic scope" value="Bacteria"/>
</dbReference>
<dbReference type="HOGENOM" id="CLU_000907_1_3_12"/>
<dbReference type="OrthoDB" id="9805026at2"/>
<dbReference type="Proteomes" id="UP000000811">
    <property type="component" value="Chromosome"/>
</dbReference>
<dbReference type="GO" id="GO:0005737">
    <property type="term" value="C:cytoplasm"/>
    <property type="evidence" value="ECO:0007669"/>
    <property type="project" value="UniProtKB-SubCell"/>
</dbReference>
<dbReference type="GO" id="GO:0003725">
    <property type="term" value="F:double-stranded RNA binding"/>
    <property type="evidence" value="ECO:0007669"/>
    <property type="project" value="TreeGrafter"/>
</dbReference>
<dbReference type="GO" id="GO:0046872">
    <property type="term" value="F:metal ion binding"/>
    <property type="evidence" value="ECO:0007669"/>
    <property type="project" value="UniProtKB-KW"/>
</dbReference>
<dbReference type="GO" id="GO:0004525">
    <property type="term" value="F:ribonuclease III activity"/>
    <property type="evidence" value="ECO:0007669"/>
    <property type="project" value="UniProtKB-UniRule"/>
</dbReference>
<dbReference type="GO" id="GO:0019843">
    <property type="term" value="F:rRNA binding"/>
    <property type="evidence" value="ECO:0007669"/>
    <property type="project" value="UniProtKB-KW"/>
</dbReference>
<dbReference type="GO" id="GO:0006397">
    <property type="term" value="P:mRNA processing"/>
    <property type="evidence" value="ECO:0007669"/>
    <property type="project" value="UniProtKB-UniRule"/>
</dbReference>
<dbReference type="GO" id="GO:0010468">
    <property type="term" value="P:regulation of gene expression"/>
    <property type="evidence" value="ECO:0007669"/>
    <property type="project" value="TreeGrafter"/>
</dbReference>
<dbReference type="GO" id="GO:0006364">
    <property type="term" value="P:rRNA processing"/>
    <property type="evidence" value="ECO:0007669"/>
    <property type="project" value="UniProtKB-UniRule"/>
</dbReference>
<dbReference type="GO" id="GO:0008033">
    <property type="term" value="P:tRNA processing"/>
    <property type="evidence" value="ECO:0007669"/>
    <property type="project" value="UniProtKB-KW"/>
</dbReference>
<dbReference type="CDD" id="cd10845">
    <property type="entry name" value="DSRM_RNAse_III_family"/>
    <property type="match status" value="1"/>
</dbReference>
<dbReference type="CDD" id="cd00593">
    <property type="entry name" value="RIBOc"/>
    <property type="match status" value="1"/>
</dbReference>
<dbReference type="FunFam" id="1.10.1520.10:FF:000001">
    <property type="entry name" value="Ribonuclease 3"/>
    <property type="match status" value="1"/>
</dbReference>
<dbReference type="Gene3D" id="3.30.160.20">
    <property type="match status" value="1"/>
</dbReference>
<dbReference type="Gene3D" id="1.10.1520.10">
    <property type="entry name" value="Ribonuclease III domain"/>
    <property type="match status" value="1"/>
</dbReference>
<dbReference type="HAMAP" id="MF_00104">
    <property type="entry name" value="RNase_III"/>
    <property type="match status" value="1"/>
</dbReference>
<dbReference type="InterPro" id="IPR014720">
    <property type="entry name" value="dsRBD_dom"/>
</dbReference>
<dbReference type="InterPro" id="IPR011907">
    <property type="entry name" value="RNase_III"/>
</dbReference>
<dbReference type="InterPro" id="IPR000999">
    <property type="entry name" value="RNase_III_dom"/>
</dbReference>
<dbReference type="InterPro" id="IPR036389">
    <property type="entry name" value="RNase_III_sf"/>
</dbReference>
<dbReference type="NCBIfam" id="TIGR02191">
    <property type="entry name" value="RNaseIII"/>
    <property type="match status" value="1"/>
</dbReference>
<dbReference type="PANTHER" id="PTHR11207:SF0">
    <property type="entry name" value="RIBONUCLEASE 3"/>
    <property type="match status" value="1"/>
</dbReference>
<dbReference type="PANTHER" id="PTHR11207">
    <property type="entry name" value="RIBONUCLEASE III"/>
    <property type="match status" value="1"/>
</dbReference>
<dbReference type="Pfam" id="PF00035">
    <property type="entry name" value="dsrm"/>
    <property type="match status" value="1"/>
</dbReference>
<dbReference type="Pfam" id="PF14622">
    <property type="entry name" value="Ribonucleas_3_3"/>
    <property type="match status" value="1"/>
</dbReference>
<dbReference type="SMART" id="SM00358">
    <property type="entry name" value="DSRM"/>
    <property type="match status" value="1"/>
</dbReference>
<dbReference type="SMART" id="SM00535">
    <property type="entry name" value="RIBOc"/>
    <property type="match status" value="1"/>
</dbReference>
<dbReference type="SUPFAM" id="SSF54768">
    <property type="entry name" value="dsRNA-binding domain-like"/>
    <property type="match status" value="1"/>
</dbReference>
<dbReference type="SUPFAM" id="SSF69065">
    <property type="entry name" value="RNase III domain-like"/>
    <property type="match status" value="1"/>
</dbReference>
<dbReference type="PROSITE" id="PS50137">
    <property type="entry name" value="DS_RBD"/>
    <property type="match status" value="1"/>
</dbReference>
<dbReference type="PROSITE" id="PS00517">
    <property type="entry name" value="RNASE_3_1"/>
    <property type="match status" value="1"/>
</dbReference>
<dbReference type="PROSITE" id="PS50142">
    <property type="entry name" value="RNASE_3_2"/>
    <property type="match status" value="1"/>
</dbReference>
<organism>
    <name type="scientific">Treponema pallidum (strain Nichols)</name>
    <dbReference type="NCBI Taxonomy" id="243276"/>
    <lineage>
        <taxon>Bacteria</taxon>
        <taxon>Pseudomonadati</taxon>
        <taxon>Spirochaetota</taxon>
        <taxon>Spirochaetia</taxon>
        <taxon>Spirochaetales</taxon>
        <taxon>Treponemataceae</taxon>
        <taxon>Treponema</taxon>
    </lineage>
</organism>
<name>RNC_TREPA</name>
<sequence>MSLCLGHIFSRSRSPLTPERRESLRRLQETLGVKFRDPTALDQALSHRSLFSSKEDHCGVRHNERMEFLGDAVLGAVAAACLYRALPDSHEGDLAKTKAVLVSTDTLSDIALSLRIDHYLLLGKGEELSGGRHKKAILADATEAVIGALFLDSGFKAAERFVLRLLLPRVRPIREKNLHHDYKSTLQVLAHQRYRSKPEYTVVKRTGPDHSVRFWVDVTVGDARFGPGYGTSKKSAEQCAARLAWEQLSGTLRE</sequence>
<keyword id="KW-0963">Cytoplasm</keyword>
<keyword id="KW-0255">Endonuclease</keyword>
<keyword id="KW-0378">Hydrolase</keyword>
<keyword id="KW-0460">Magnesium</keyword>
<keyword id="KW-0479">Metal-binding</keyword>
<keyword id="KW-0507">mRNA processing</keyword>
<keyword id="KW-0540">Nuclease</keyword>
<keyword id="KW-1185">Reference proteome</keyword>
<keyword id="KW-0694">RNA-binding</keyword>
<keyword id="KW-0698">rRNA processing</keyword>
<keyword id="KW-0699">rRNA-binding</keyword>
<keyword id="KW-0819">tRNA processing</keyword>